<comment type="function">
    <text evidence="2 5">Receptor for extracellular adenine nucleotides such as ADP (PubMed:8508924). In platelets, binding to ADP leads to mobilization of intracellular calcium ions via activation of phospholipase C, a change in platelet shape, and ultimately platelet aggregation (By similarity).</text>
</comment>
<comment type="subcellular location">
    <subcellularLocation>
        <location evidence="5">Cell membrane</location>
        <topology evidence="1">Multi-pass membrane protein</topology>
    </subcellularLocation>
</comment>
<comment type="tissue specificity">
    <text>Brain, spinal cord, gastrointestinal tract, spleen and leg muscle. Is not detected in the heart, liver, stomach, lung and kidney.</text>
</comment>
<comment type="similarity">
    <text evidence="4">Belongs to the G-protein coupled receptor 1 family.</text>
</comment>
<dbReference type="EMBL" id="X73268">
    <property type="protein sequence ID" value="CAA51716.1"/>
    <property type="molecule type" value="mRNA"/>
</dbReference>
<dbReference type="PIR" id="S33733">
    <property type="entry name" value="S33733"/>
</dbReference>
<dbReference type="RefSeq" id="NP_001383043.1">
    <property type="nucleotide sequence ID" value="NM_001396114.1"/>
</dbReference>
<dbReference type="RefSeq" id="NP_990664.1">
    <property type="nucleotide sequence ID" value="NM_205333.2"/>
</dbReference>
<dbReference type="RefSeq" id="XP_046754290.1">
    <property type="nucleotide sequence ID" value="XM_046898334.1"/>
</dbReference>
<dbReference type="RefSeq" id="XP_046779630.1">
    <property type="nucleotide sequence ID" value="XM_046923674.1"/>
</dbReference>
<dbReference type="SMR" id="P34996"/>
<dbReference type="FunCoup" id="P34996">
    <property type="interactions" value="165"/>
</dbReference>
<dbReference type="STRING" id="9031.ENSGALP00000016845"/>
<dbReference type="GlyCosmos" id="P34996">
    <property type="glycosylation" value="4 sites, No reported glycans"/>
</dbReference>
<dbReference type="GlyGen" id="P34996">
    <property type="glycosylation" value="4 sites"/>
</dbReference>
<dbReference type="PaxDb" id="9031-ENSGALP00000016845"/>
<dbReference type="Ensembl" id="ENSGALT00010002404.1">
    <property type="protein sequence ID" value="ENSGALP00010001058.1"/>
    <property type="gene ID" value="ENSGALG00010001082.1"/>
</dbReference>
<dbReference type="Ensembl" id="ENSGALT00010002409.1">
    <property type="protein sequence ID" value="ENSGALP00010001059.1"/>
    <property type="gene ID" value="ENSGALG00010001082.1"/>
</dbReference>
<dbReference type="Ensembl" id="ENSGALT00010002411.1">
    <property type="protein sequence ID" value="ENSGALP00010001060.1"/>
    <property type="gene ID" value="ENSGALG00010001082.1"/>
</dbReference>
<dbReference type="GeneID" id="396275"/>
<dbReference type="KEGG" id="gga:396275"/>
<dbReference type="CTD" id="5028"/>
<dbReference type="VEuPathDB" id="HostDB:geneid_396275"/>
<dbReference type="eggNOG" id="ENOG502QWPV">
    <property type="taxonomic scope" value="Eukaryota"/>
</dbReference>
<dbReference type="GeneTree" id="ENSGT01030000234621"/>
<dbReference type="HOGENOM" id="CLU_009579_8_2_1"/>
<dbReference type="InParanoid" id="P34996"/>
<dbReference type="OMA" id="GFCVPFI"/>
<dbReference type="OrthoDB" id="8190652at2759"/>
<dbReference type="PhylomeDB" id="P34996"/>
<dbReference type="Reactome" id="R-GGA-416476">
    <property type="pathway name" value="G alpha (q) signalling events"/>
</dbReference>
<dbReference type="Reactome" id="R-GGA-417957">
    <property type="pathway name" value="P2Y receptors"/>
</dbReference>
<dbReference type="Reactome" id="R-GGA-418592">
    <property type="pathway name" value="ADP signalling through P2Y purinoceptor 1"/>
</dbReference>
<dbReference type="PRO" id="PR:P34996"/>
<dbReference type="Proteomes" id="UP000000539">
    <property type="component" value="Chromosome 9"/>
</dbReference>
<dbReference type="Bgee" id="ENSGALG00000010357">
    <property type="expression patterns" value="Expressed in skeletal muscle tissue and 10 other cell types or tissues"/>
</dbReference>
<dbReference type="GO" id="GO:0005886">
    <property type="term" value="C:plasma membrane"/>
    <property type="evidence" value="ECO:0000250"/>
    <property type="project" value="UniProtKB"/>
</dbReference>
<dbReference type="GO" id="GO:0031686">
    <property type="term" value="F:A1 adenosine receptor binding"/>
    <property type="evidence" value="ECO:0000318"/>
    <property type="project" value="GO_Central"/>
</dbReference>
<dbReference type="GO" id="GO:0005524">
    <property type="term" value="F:ATP binding"/>
    <property type="evidence" value="ECO:0000250"/>
    <property type="project" value="UniProtKB"/>
</dbReference>
<dbReference type="GO" id="GO:0001621">
    <property type="term" value="F:G protein-coupled ADP receptor activity"/>
    <property type="evidence" value="ECO:0000250"/>
    <property type="project" value="UniProtKB"/>
</dbReference>
<dbReference type="GO" id="GO:0045031">
    <property type="term" value="F:G protein-coupled ATP receptor activity"/>
    <property type="evidence" value="ECO:0000318"/>
    <property type="project" value="GO_Central"/>
</dbReference>
<dbReference type="GO" id="GO:0071415">
    <property type="term" value="P:cellular response to purine-containing compound"/>
    <property type="evidence" value="ECO:0000250"/>
    <property type="project" value="UniProtKB"/>
</dbReference>
<dbReference type="GO" id="GO:0007200">
    <property type="term" value="P:phospholipase C-activating G protein-coupled receptor signaling pathway"/>
    <property type="evidence" value="ECO:0000250"/>
    <property type="project" value="UniProtKB"/>
</dbReference>
<dbReference type="GO" id="GO:0030168">
    <property type="term" value="P:platelet activation"/>
    <property type="evidence" value="ECO:0007669"/>
    <property type="project" value="InterPro"/>
</dbReference>
<dbReference type="GO" id="GO:0008360">
    <property type="term" value="P:regulation of cell shape"/>
    <property type="evidence" value="ECO:0000250"/>
    <property type="project" value="UniProtKB"/>
</dbReference>
<dbReference type="GO" id="GO:0090075">
    <property type="term" value="P:relaxation of muscle"/>
    <property type="evidence" value="ECO:0007669"/>
    <property type="project" value="InterPro"/>
</dbReference>
<dbReference type="CDD" id="cd15377">
    <property type="entry name" value="7tmA_P2Y1"/>
    <property type="match status" value="1"/>
</dbReference>
<dbReference type="FunFam" id="1.20.1070.10:FF:000017">
    <property type="entry name" value="lysophosphatidic acid receptor 4"/>
    <property type="match status" value="1"/>
</dbReference>
<dbReference type="Gene3D" id="1.20.1070.10">
    <property type="entry name" value="Rhodopsin 7-helix transmembrane proteins"/>
    <property type="match status" value="1"/>
</dbReference>
<dbReference type="InterPro" id="IPR000276">
    <property type="entry name" value="GPCR_Rhodpsn"/>
</dbReference>
<dbReference type="InterPro" id="IPR017452">
    <property type="entry name" value="GPCR_Rhodpsn_7TM"/>
</dbReference>
<dbReference type="InterPro" id="IPR000142">
    <property type="entry name" value="P2Y1_rcpt"/>
</dbReference>
<dbReference type="PANTHER" id="PTHR24231:SF2">
    <property type="entry name" value="P2Y PURINOCEPTOR 1"/>
    <property type="match status" value="1"/>
</dbReference>
<dbReference type="PANTHER" id="PTHR24231">
    <property type="entry name" value="PURINOCEPTOR-RELATED G-PROTEIN COUPLED RECEPTOR"/>
    <property type="match status" value="1"/>
</dbReference>
<dbReference type="Pfam" id="PF00001">
    <property type="entry name" value="7tm_1"/>
    <property type="match status" value="1"/>
</dbReference>
<dbReference type="PRINTS" id="PR00237">
    <property type="entry name" value="GPCRRHODOPSN"/>
</dbReference>
<dbReference type="PRINTS" id="PR00595">
    <property type="entry name" value="P2Y1PRNOCPTR"/>
</dbReference>
<dbReference type="PRINTS" id="PR01157">
    <property type="entry name" value="P2YPURNOCPTR"/>
</dbReference>
<dbReference type="SUPFAM" id="SSF81321">
    <property type="entry name" value="Family A G protein-coupled receptor-like"/>
    <property type="match status" value="1"/>
</dbReference>
<dbReference type="PROSITE" id="PS00237">
    <property type="entry name" value="G_PROTEIN_RECEP_F1_1"/>
    <property type="match status" value="1"/>
</dbReference>
<dbReference type="PROSITE" id="PS50262">
    <property type="entry name" value="G_PROTEIN_RECEP_F1_2"/>
    <property type="match status" value="1"/>
</dbReference>
<protein>
    <recommendedName>
        <fullName>P2Y purinoceptor 1</fullName>
        <shortName>P2Y1</shortName>
    </recommendedName>
    <alternativeName>
        <fullName evidence="6">ATP receptor</fullName>
    </alternativeName>
    <alternativeName>
        <fullName>Purinergic receptor</fullName>
    </alternativeName>
</protein>
<organism>
    <name type="scientific">Gallus gallus</name>
    <name type="common">Chicken</name>
    <dbReference type="NCBI Taxonomy" id="9031"/>
    <lineage>
        <taxon>Eukaryota</taxon>
        <taxon>Metazoa</taxon>
        <taxon>Chordata</taxon>
        <taxon>Craniata</taxon>
        <taxon>Vertebrata</taxon>
        <taxon>Euteleostomi</taxon>
        <taxon>Archelosauria</taxon>
        <taxon>Archosauria</taxon>
        <taxon>Dinosauria</taxon>
        <taxon>Saurischia</taxon>
        <taxon>Theropoda</taxon>
        <taxon>Coelurosauria</taxon>
        <taxon>Aves</taxon>
        <taxon>Neognathae</taxon>
        <taxon>Galloanserae</taxon>
        <taxon>Galliformes</taxon>
        <taxon>Phasianidae</taxon>
        <taxon>Phasianinae</taxon>
        <taxon>Gallus</taxon>
    </lineage>
</organism>
<evidence type="ECO:0000250" key="1">
    <source>
        <dbReference type="UniProtKB" id="P47900"/>
    </source>
</evidence>
<evidence type="ECO:0000250" key="2">
    <source>
        <dbReference type="UniProtKB" id="P49650"/>
    </source>
</evidence>
<evidence type="ECO:0000255" key="3"/>
<evidence type="ECO:0000255" key="4">
    <source>
        <dbReference type="PROSITE-ProRule" id="PRU00521"/>
    </source>
</evidence>
<evidence type="ECO:0000269" key="5">
    <source>
    </source>
</evidence>
<evidence type="ECO:0000303" key="6">
    <source>
    </source>
</evidence>
<evidence type="ECO:0000305" key="7"/>
<accession>P34996</accession>
<gene>
    <name type="primary">P2RY1</name>
</gene>
<reference key="1">
    <citation type="journal article" date="1993" name="FEBS Lett.">
        <title>Cloning and functional expression of a brain G-protein-coupled ATP receptor.</title>
        <authorList>
            <person name="Webb T.E."/>
            <person name="Simon J."/>
            <person name="Krishek B.J."/>
            <person name="Bateson A.N."/>
            <person name="Smart T.G."/>
            <person name="King B.F."/>
            <person name="Burnstock G."/>
            <person name="Barnard E.A."/>
        </authorList>
    </citation>
    <scope>NUCLEOTIDE SEQUENCE [MRNA]</scope>
    <scope>FUNCTION</scope>
    <scope>SUBCELLULAR LOCATION</scope>
    <source>
        <tissue>Brain</tissue>
    </source>
</reference>
<reference key="2">
    <citation type="journal article" date="1995" name="Drug Des. Discov.">
        <title>Modelling the P2Y purinoceptor using rhodopsin as template.</title>
        <authorList>
            <person name="van Rhee A.M."/>
            <person name="Fischer B."/>
            <person name="van Galen P.J.M."/>
            <person name="Jacobson K.A."/>
        </authorList>
    </citation>
    <scope>3D-STRUCTURE MODELING</scope>
</reference>
<sequence length="362" mass="41194">MTEALISAALNGTQPELLAGGWAAGNATTKCSLTKTGFQFYYLPTVYILVFITGFLGNSVAIWMFVFHMRPWSGISVYMFNLALADFLYVLTLPALIFYYFNKTDWIFGDVMCKLQRFIFHVNLYGSILFLTCISVHRYTGVVHPLKSLGRLKKKNAVYVSSLVWALVVAVIAPILFYSGTGVRRNKTITCYDTTADEYLRSYFVYSMCTTVFMFCIPFIVILGCYGLIVKALIYKDLDNSPLRRKSIYLVIIVLTVFAVSYLPFHVMKTLNLRARLDFQTPQMCAFNDKVYATYQVTRGLASLNSCVDPILYFLAGDTFRRRLSRATRKSSRRSEPNVQSKSEEMTLNILTEYKQNGDTSL</sequence>
<proteinExistence type="evidence at transcript level"/>
<feature type="chain" id="PRO_0000070009" description="P2Y purinoceptor 1">
    <location>
        <begin position="1"/>
        <end position="362"/>
    </location>
</feature>
<feature type="topological domain" description="Extracellular" evidence="7">
    <location>
        <begin position="1"/>
        <end position="40"/>
    </location>
</feature>
<feature type="transmembrane region" description="Helical; Name=1" evidence="1">
    <location>
        <begin position="41"/>
        <end position="63"/>
    </location>
</feature>
<feature type="topological domain" description="Cytoplasmic" evidence="7">
    <location>
        <begin position="64"/>
        <end position="76"/>
    </location>
</feature>
<feature type="transmembrane region" description="Helical; Name=2" evidence="1">
    <location>
        <begin position="77"/>
        <end position="98"/>
    </location>
</feature>
<feature type="topological domain" description="Extracellular" evidence="7">
    <location>
        <begin position="99"/>
        <end position="114"/>
    </location>
</feature>
<feature type="transmembrane region" description="Helical; Name=3" evidence="1">
    <location>
        <begin position="115"/>
        <end position="136"/>
    </location>
</feature>
<feature type="topological domain" description="Cytoplasmic" evidence="7">
    <location>
        <begin position="137"/>
        <end position="155"/>
    </location>
</feature>
<feature type="transmembrane region" description="Helical; Name=4" evidence="1">
    <location>
        <begin position="156"/>
        <end position="177"/>
    </location>
</feature>
<feature type="topological domain" description="Extracellular" evidence="7">
    <location>
        <begin position="178"/>
        <end position="203"/>
    </location>
</feature>
<feature type="transmembrane region" description="Helical; Name=5" evidence="1">
    <location>
        <begin position="204"/>
        <end position="226"/>
    </location>
</feature>
<feature type="topological domain" description="Cytoplasmic" evidence="7">
    <location>
        <begin position="227"/>
        <end position="249"/>
    </location>
</feature>
<feature type="transmembrane region" description="Helical; Name=6" evidence="1">
    <location>
        <begin position="250"/>
        <end position="273"/>
    </location>
</feature>
<feature type="topological domain" description="Extracellular" evidence="7">
    <location>
        <begin position="274"/>
        <end position="292"/>
    </location>
</feature>
<feature type="transmembrane region" description="Helical; Name=7" evidence="1">
    <location>
        <begin position="293"/>
        <end position="314"/>
    </location>
</feature>
<feature type="topological domain" description="Cytoplasmic" evidence="7">
    <location>
        <begin position="315"/>
        <end position="362"/>
    </location>
</feature>
<feature type="binding site" evidence="1">
    <location>
        <position position="35"/>
    </location>
    <ligand>
        <name>ADP</name>
        <dbReference type="ChEBI" id="CHEBI:456216"/>
    </ligand>
</feature>
<feature type="binding site" evidence="1">
    <location>
        <begin position="192"/>
        <end position="194"/>
    </location>
    <ligand>
        <name>ADP</name>
        <dbReference type="ChEBI" id="CHEBI:456216"/>
    </ligand>
</feature>
<feature type="binding site" evidence="1">
    <location>
        <begin position="272"/>
        <end position="276"/>
    </location>
    <ligand>
        <name>ADP</name>
        <dbReference type="ChEBI" id="CHEBI:456216"/>
    </ligand>
</feature>
<feature type="binding site" evidence="1">
    <location>
        <begin position="292"/>
        <end position="295"/>
    </location>
    <ligand>
        <name>ADP</name>
        <dbReference type="ChEBI" id="CHEBI:456216"/>
    </ligand>
</feature>
<feature type="binding site" evidence="1">
    <location>
        <position position="299"/>
    </location>
    <ligand>
        <name>ADP</name>
        <dbReference type="ChEBI" id="CHEBI:456216"/>
    </ligand>
</feature>
<feature type="glycosylation site" description="N-linked (GlcNAc...) asparagine" evidence="3">
    <location>
        <position position="11"/>
    </location>
</feature>
<feature type="glycosylation site" description="N-linked (GlcNAc...) asparagine" evidence="3">
    <location>
        <position position="26"/>
    </location>
</feature>
<feature type="glycosylation site" description="N-linked (GlcNAc...) asparagine" evidence="3">
    <location>
        <position position="102"/>
    </location>
</feature>
<feature type="glycosylation site" description="N-linked (GlcNAc...) asparagine" evidence="3">
    <location>
        <position position="186"/>
    </location>
</feature>
<feature type="disulfide bond" evidence="1">
    <location>
        <begin position="31"/>
        <end position="285"/>
    </location>
</feature>
<feature type="disulfide bond" evidence="4">
    <location>
        <begin position="113"/>
        <end position="191"/>
    </location>
</feature>
<name>P2RY1_CHICK</name>
<keyword id="KW-0067">ATP-binding</keyword>
<keyword id="KW-1003">Cell membrane</keyword>
<keyword id="KW-1015">Disulfide bond</keyword>
<keyword id="KW-0297">G-protein coupled receptor</keyword>
<keyword id="KW-0325">Glycoprotein</keyword>
<keyword id="KW-0472">Membrane</keyword>
<keyword id="KW-0547">Nucleotide-binding</keyword>
<keyword id="KW-0675">Receptor</keyword>
<keyword id="KW-1185">Reference proteome</keyword>
<keyword id="KW-0807">Transducer</keyword>
<keyword id="KW-0812">Transmembrane</keyword>
<keyword id="KW-1133">Transmembrane helix</keyword>